<evidence type="ECO:0000250" key="1">
    <source>
        <dbReference type="UniProtKB" id="Q0HA38"/>
    </source>
</evidence>
<evidence type="ECO:0000250" key="2">
    <source>
        <dbReference type="UniProtKB" id="Q7Z4L5"/>
    </source>
</evidence>
<evidence type="ECO:0000255" key="3"/>
<evidence type="ECO:0000305" key="4"/>
<comment type="function">
    <text evidence="1 2">Component of the IFT complex A (IFT-A), a complex required for retrograde ciliary transport and entry into cilia of G protein-coupled receptors (GPCRs). Negatively modulates the SHH signal transduction.</text>
</comment>
<comment type="subunit">
    <text evidence="2">Component of the IFT complex A (IFT-A).</text>
</comment>
<comment type="similarity">
    <text evidence="4">Belongs to the TTC21 family.</text>
</comment>
<reference key="1">
    <citation type="submission" date="2004-06" db="EMBL/GenBank/DDBJ databases">
        <authorList>
            <consortium name="NIH - Xenopus Gene Collection (XGC) project"/>
        </authorList>
    </citation>
    <scope>NUCLEOTIDE SEQUENCE [LARGE SCALE MRNA]</scope>
    <source>
        <tissue>Oocyte</tissue>
    </source>
</reference>
<sequence>MADTDHYITAGIIYYCQEKYHQHVQNLAREGLKKYSNDPVLQFFKIYGMLMEDRVQDAIRRLEPIKDDPTVVLCSTMALIYAHKRSERVDREAVADLENKLKETRKSAGPKALYYAGMFLWLMGRTDKAREYIDRMLKISNRSREGLVLRGWLDLSSEKESTVNKSIRYFEEGIQDNKDIFALIGKAQYFMAHQNYSGALDVINQIIVNYPPFLPALTLKMRLFLAQQDWDQTLETAQRILLKDGANIDAFQILTIHSVTREGSTEKALNYLRELINALDAAEPRNPMLHLHKILPISSLCGRNQPILKQVSVVIGRIFQTAPHAEVATALANNFILQGNVTEAAGWYATAMKLDGNHLEGLTGVIQCQILQGQLEEAEQQLDFLHEIQESIGGTKELCYIQALLASRQGKEEQIITELLKKAVELHYAAVRGLPLGVEYFEKLNPTFLINIVQEYLVLCPKQPKAPGEPLSPLLKQALSILTPVVSVAPALTEPLYYTAQIKYLAGNLEGAQGSLQRCIEVDTACADFHLLMAQIHYAQGKFAECSVSLETGVSHNFKVRERPLYHLIRARVLRKTGELQEAIKTLKMTMSLQEMKRGALKKSTWGSLNSSDKVSIYLELAELLRLNGEQHEATKIIQDAINEFGGTPEEIRIVVANADMAVAKGDVEMALNVLRDIAPNQPYYTEVKQKMAQIYLNNRKDKKLYIGCYRELCEQQPGPHTSVLLGDALMNIQEPEKALEVYNEALHKNPQDASLANRIGQALIKTHQYKKAVNYYEAAQKISGQDFLCCDLAELLIKLKQYSKAEAVLKQALAHEPVSDLTSMVTDAKCLGLLGTTYQNYKKEESADILNKALELQQRILKRVPMEQPEMAPAQKQATSEICVQLAEHYVDQRNYEQAANYYKEAMVYSQDSKVKLQLSRLYLMMGDLDSCENHCSALLENHSFKEEAAMMMADVMFRKQDYTKSIELFDQILEENPDNFAVLSKLIDLLRRSGNLSKAPMFFEKALANSSRTTLEPGYNYCKGLYCWYLGQPNDGLKYFNKARKDSEWGQNAISNMVQICLNPDNEIVGGEVFEAPDEADGLLGEKRESEMLGVRTAEKLLKEFHPRTLNGRNQLALLQNHCLMATKDKANVETALSAFTEMATSEKDNVCAILAVAQAYMILRQTPRARNQLKRLSKVPWSLADAEDLEKSWLLLADVYIKLGKYDIATELLKRCLLYNKSCYKAYEYLGFIMENEQSYKDAAANYRLAWDYSNQSNPAVGFRLAFNYLKDKKYVDAIDICHKVLKAHPTYPKIEREILAKAQTSLKP</sequence>
<proteinExistence type="evidence at transcript level"/>
<feature type="chain" id="PRO_0000291919" description="Tetratricopeptide repeat protein 21B">
    <location>
        <begin position="1"/>
        <end position="1312"/>
    </location>
</feature>
<feature type="repeat" description="TPR 1">
    <location>
        <begin position="4"/>
        <end position="38"/>
    </location>
</feature>
<feature type="repeat" description="TPR 2">
    <location>
        <begin position="110"/>
        <end position="143"/>
    </location>
</feature>
<feature type="repeat" description="TPR 3">
    <location>
        <begin position="147"/>
        <end position="180"/>
    </location>
</feature>
<feature type="repeat" description="TPR 4">
    <location>
        <begin position="182"/>
        <end position="213"/>
    </location>
</feature>
<feature type="repeat" description="TPR 5">
    <location>
        <begin position="214"/>
        <end position="247"/>
    </location>
</feature>
<feature type="repeat" description="TPR 6">
    <location>
        <begin position="325"/>
        <end position="358"/>
    </location>
</feature>
<feature type="repeat" description="TPR 7">
    <location>
        <begin position="493"/>
        <end position="526"/>
    </location>
</feature>
<feature type="repeat" description="TPR 8">
    <location>
        <begin position="528"/>
        <end position="560"/>
    </location>
</feature>
<feature type="repeat" description="TPR 9">
    <location>
        <begin position="564"/>
        <end position="597"/>
    </location>
</feature>
<feature type="repeat" description="TPR 10">
    <location>
        <begin position="615"/>
        <end position="648"/>
    </location>
</feature>
<feature type="repeat" description="TPR 11">
    <location>
        <begin position="720"/>
        <end position="753"/>
    </location>
</feature>
<feature type="repeat" description="TPR 12">
    <location>
        <begin position="755"/>
        <end position="787"/>
    </location>
</feature>
<feature type="repeat" description="TPR 13">
    <location>
        <begin position="789"/>
        <end position="820"/>
    </location>
</feature>
<feature type="repeat" description="TPR 14">
    <location>
        <begin position="829"/>
        <end position="861"/>
    </location>
</feature>
<feature type="repeat" description="TPR 15">
    <location>
        <begin position="881"/>
        <end position="914"/>
    </location>
</feature>
<feature type="repeat" description="TPR 16">
    <location>
        <begin position="916"/>
        <end position="947"/>
    </location>
</feature>
<feature type="repeat" description="TPR 17">
    <location>
        <begin position="948"/>
        <end position="981"/>
    </location>
</feature>
<feature type="repeat" description="TPR 18">
    <location>
        <begin position="983"/>
        <end position="1015"/>
    </location>
</feature>
<feature type="repeat" description="TPR 19">
    <location>
        <begin position="1019"/>
        <end position="1052"/>
    </location>
</feature>
<feature type="repeat" description="TPR 20">
    <location>
        <begin position="1193"/>
        <end position="1226"/>
    </location>
</feature>
<feature type="repeat" description="TPR 21">
    <location>
        <begin position="1228"/>
        <end position="1260"/>
    </location>
</feature>
<feature type="repeat" description="TPR 22">
    <location>
        <begin position="1262"/>
        <end position="1295"/>
    </location>
</feature>
<feature type="coiled-coil region" evidence="3">
    <location>
        <begin position="365"/>
        <end position="392"/>
    </location>
</feature>
<name>TT21B_XENLA</name>
<accession>Q6INC1</accession>
<dbReference type="EMBL" id="BC072362">
    <property type="protein sequence ID" value="AAH72362.1"/>
    <property type="molecule type" value="mRNA"/>
</dbReference>
<dbReference type="RefSeq" id="NP_001085105.1">
    <property type="nucleotide sequence ID" value="NM_001091636.1"/>
</dbReference>
<dbReference type="SMR" id="Q6INC1"/>
<dbReference type="GeneID" id="432176"/>
<dbReference type="KEGG" id="xla:432176"/>
<dbReference type="AGR" id="Xenbase:XB-GENE-981819"/>
<dbReference type="CTD" id="432176"/>
<dbReference type="Xenbase" id="XB-GENE-981819">
    <property type="gene designation" value="ttc21a.L"/>
</dbReference>
<dbReference type="OrthoDB" id="10259630at2759"/>
<dbReference type="Proteomes" id="UP000186698">
    <property type="component" value="Chromosome 6L"/>
</dbReference>
<dbReference type="Bgee" id="432176">
    <property type="expression patterns" value="Expressed in testis and 18 other cell types or tissues"/>
</dbReference>
<dbReference type="GO" id="GO:0005929">
    <property type="term" value="C:cilium"/>
    <property type="evidence" value="ECO:0007669"/>
    <property type="project" value="GOC"/>
</dbReference>
<dbReference type="GO" id="GO:0030991">
    <property type="term" value="C:intraciliary transport particle A"/>
    <property type="evidence" value="ECO:0000250"/>
    <property type="project" value="UniProtKB"/>
</dbReference>
<dbReference type="GO" id="GO:0035721">
    <property type="term" value="P:intraciliary retrograde transport"/>
    <property type="evidence" value="ECO:0000318"/>
    <property type="project" value="GO_Central"/>
</dbReference>
<dbReference type="GO" id="GO:0061512">
    <property type="term" value="P:protein localization to cilium"/>
    <property type="evidence" value="ECO:0000318"/>
    <property type="project" value="GO_Central"/>
</dbReference>
<dbReference type="FunFam" id="1.25.40.10:FF:000279">
    <property type="entry name" value="Tetratricopeptide repeat domain 21A"/>
    <property type="match status" value="1"/>
</dbReference>
<dbReference type="FunFam" id="1.25.40.10:FF:000568">
    <property type="entry name" value="Tetratricopeptide repeat domain 21A"/>
    <property type="match status" value="1"/>
</dbReference>
<dbReference type="FunFam" id="1.25.40.10:FF:003660">
    <property type="entry name" value="Tetratricopeptide repeat domain 21A"/>
    <property type="match status" value="1"/>
</dbReference>
<dbReference type="FunFam" id="1.25.40.10:FF:000245">
    <property type="entry name" value="Tetratricopeptide repeat domain 21B"/>
    <property type="match status" value="1"/>
</dbReference>
<dbReference type="FunFam" id="1.25.40.10:FF:000377">
    <property type="entry name" value="Tetratricopeptide repeat domain 21B"/>
    <property type="match status" value="1"/>
</dbReference>
<dbReference type="Gene3D" id="1.25.40.10">
    <property type="entry name" value="Tetratricopeptide repeat domain"/>
    <property type="match status" value="5"/>
</dbReference>
<dbReference type="InterPro" id="IPR056832">
    <property type="entry name" value="ARM_TT21_2nd"/>
</dbReference>
<dbReference type="InterPro" id="IPR056836">
    <property type="entry name" value="ARM_TT21_4th"/>
</dbReference>
<dbReference type="InterPro" id="IPR056835">
    <property type="entry name" value="ARM_TT21_5th"/>
</dbReference>
<dbReference type="InterPro" id="IPR056834">
    <property type="entry name" value="ARM_TT21_C"/>
</dbReference>
<dbReference type="InterPro" id="IPR056833">
    <property type="entry name" value="ARM_TT21_N"/>
</dbReference>
<dbReference type="InterPro" id="IPR011990">
    <property type="entry name" value="TPR-like_helical_dom_sf"/>
</dbReference>
<dbReference type="InterPro" id="IPR019734">
    <property type="entry name" value="TPR_rpt"/>
</dbReference>
<dbReference type="InterPro" id="IPR040364">
    <property type="entry name" value="TTC21A/TTC21B"/>
</dbReference>
<dbReference type="PANTHER" id="PTHR14699">
    <property type="entry name" value="STI2 PROTEIN-RELATED"/>
    <property type="match status" value="1"/>
</dbReference>
<dbReference type="PANTHER" id="PTHR14699:SF2">
    <property type="entry name" value="TETRATRICOPEPTIDE REPEAT PROTEIN 21A"/>
    <property type="match status" value="1"/>
</dbReference>
<dbReference type="Pfam" id="PF25058">
    <property type="entry name" value="ARM_TT21"/>
    <property type="match status" value="1"/>
</dbReference>
<dbReference type="Pfam" id="PF25060">
    <property type="entry name" value="ARM_TT21_2nd"/>
    <property type="match status" value="1"/>
</dbReference>
<dbReference type="Pfam" id="PF25068">
    <property type="entry name" value="ARM_TT21_4th"/>
    <property type="match status" value="1"/>
</dbReference>
<dbReference type="Pfam" id="PF25064">
    <property type="entry name" value="ARM_TT21_5th"/>
    <property type="match status" value="1"/>
</dbReference>
<dbReference type="Pfam" id="PF25063">
    <property type="entry name" value="ARM_TT21_C"/>
    <property type="match status" value="1"/>
</dbReference>
<dbReference type="Pfam" id="PF25062">
    <property type="entry name" value="ARM_TT21_N"/>
    <property type="match status" value="1"/>
</dbReference>
<dbReference type="SMART" id="SM00028">
    <property type="entry name" value="TPR"/>
    <property type="match status" value="16"/>
</dbReference>
<dbReference type="SUPFAM" id="SSF48452">
    <property type="entry name" value="TPR-like"/>
    <property type="match status" value="7"/>
</dbReference>
<dbReference type="PROSITE" id="PS50005">
    <property type="entry name" value="TPR"/>
    <property type="match status" value="11"/>
</dbReference>
<dbReference type="PROSITE" id="PS50293">
    <property type="entry name" value="TPR_REGION"/>
    <property type="match status" value="5"/>
</dbReference>
<gene>
    <name type="primary">ttc21b</name>
</gene>
<organism>
    <name type="scientific">Xenopus laevis</name>
    <name type="common">African clawed frog</name>
    <dbReference type="NCBI Taxonomy" id="8355"/>
    <lineage>
        <taxon>Eukaryota</taxon>
        <taxon>Metazoa</taxon>
        <taxon>Chordata</taxon>
        <taxon>Craniata</taxon>
        <taxon>Vertebrata</taxon>
        <taxon>Euteleostomi</taxon>
        <taxon>Amphibia</taxon>
        <taxon>Batrachia</taxon>
        <taxon>Anura</taxon>
        <taxon>Pipoidea</taxon>
        <taxon>Pipidae</taxon>
        <taxon>Xenopodinae</taxon>
        <taxon>Xenopus</taxon>
        <taxon>Xenopus</taxon>
    </lineage>
</organism>
<protein>
    <recommendedName>
        <fullName>Tetratricopeptide repeat protein 21B</fullName>
        <shortName>TPR repeat protein 21B</shortName>
    </recommendedName>
</protein>
<keyword id="KW-0175">Coiled coil</keyword>
<keyword id="KW-1185">Reference proteome</keyword>
<keyword id="KW-0677">Repeat</keyword>
<keyword id="KW-0802">TPR repeat</keyword>